<gene>
    <name type="primary">Nceh1</name>
    <name type="synonym">Aadacl1</name>
    <name type="synonym">Kiaa1363</name>
</gene>
<reference key="1">
    <citation type="journal article" date="2004" name="DNA Res.">
        <title>Prediction of the coding sequences of mouse homologues of KIAA gene: IV. The complete nucleotide sequences of 500 mouse KIAA-homologous cDNAs identified by screening of terminal sequences of cDNA clones randomly sampled from size-fractionated libraries.</title>
        <authorList>
            <person name="Okazaki N."/>
            <person name="Kikuno R."/>
            <person name="Ohara R."/>
            <person name="Inamoto S."/>
            <person name="Koseki H."/>
            <person name="Hiraoka S."/>
            <person name="Saga Y."/>
            <person name="Seino S."/>
            <person name="Nishimura M."/>
            <person name="Kaisho T."/>
            <person name="Hoshino K."/>
            <person name="Kitamura H."/>
            <person name="Nagase T."/>
            <person name="Ohara O."/>
            <person name="Koga H."/>
        </authorList>
    </citation>
    <scope>NUCLEOTIDE SEQUENCE [LARGE SCALE MRNA]</scope>
    <source>
        <tissue>Embryonic intestine</tissue>
    </source>
</reference>
<reference key="2">
    <citation type="journal article" date="2005" name="Science">
        <title>The transcriptional landscape of the mammalian genome.</title>
        <authorList>
            <person name="Carninci P."/>
            <person name="Kasukawa T."/>
            <person name="Katayama S."/>
            <person name="Gough J."/>
            <person name="Frith M.C."/>
            <person name="Maeda N."/>
            <person name="Oyama R."/>
            <person name="Ravasi T."/>
            <person name="Lenhard B."/>
            <person name="Wells C."/>
            <person name="Kodzius R."/>
            <person name="Shimokawa K."/>
            <person name="Bajic V.B."/>
            <person name="Brenner S.E."/>
            <person name="Batalov S."/>
            <person name="Forrest A.R."/>
            <person name="Zavolan M."/>
            <person name="Davis M.J."/>
            <person name="Wilming L.G."/>
            <person name="Aidinis V."/>
            <person name="Allen J.E."/>
            <person name="Ambesi-Impiombato A."/>
            <person name="Apweiler R."/>
            <person name="Aturaliya R.N."/>
            <person name="Bailey T.L."/>
            <person name="Bansal M."/>
            <person name="Baxter L."/>
            <person name="Beisel K.W."/>
            <person name="Bersano T."/>
            <person name="Bono H."/>
            <person name="Chalk A.M."/>
            <person name="Chiu K.P."/>
            <person name="Choudhary V."/>
            <person name="Christoffels A."/>
            <person name="Clutterbuck D.R."/>
            <person name="Crowe M.L."/>
            <person name="Dalla E."/>
            <person name="Dalrymple B.P."/>
            <person name="de Bono B."/>
            <person name="Della Gatta G."/>
            <person name="di Bernardo D."/>
            <person name="Down T."/>
            <person name="Engstrom P."/>
            <person name="Fagiolini M."/>
            <person name="Faulkner G."/>
            <person name="Fletcher C.F."/>
            <person name="Fukushima T."/>
            <person name="Furuno M."/>
            <person name="Futaki S."/>
            <person name="Gariboldi M."/>
            <person name="Georgii-Hemming P."/>
            <person name="Gingeras T.R."/>
            <person name="Gojobori T."/>
            <person name="Green R.E."/>
            <person name="Gustincich S."/>
            <person name="Harbers M."/>
            <person name="Hayashi Y."/>
            <person name="Hensch T.K."/>
            <person name="Hirokawa N."/>
            <person name="Hill D."/>
            <person name="Huminiecki L."/>
            <person name="Iacono M."/>
            <person name="Ikeo K."/>
            <person name="Iwama A."/>
            <person name="Ishikawa T."/>
            <person name="Jakt M."/>
            <person name="Kanapin A."/>
            <person name="Katoh M."/>
            <person name="Kawasawa Y."/>
            <person name="Kelso J."/>
            <person name="Kitamura H."/>
            <person name="Kitano H."/>
            <person name="Kollias G."/>
            <person name="Krishnan S.P."/>
            <person name="Kruger A."/>
            <person name="Kummerfeld S.K."/>
            <person name="Kurochkin I.V."/>
            <person name="Lareau L.F."/>
            <person name="Lazarevic D."/>
            <person name="Lipovich L."/>
            <person name="Liu J."/>
            <person name="Liuni S."/>
            <person name="McWilliam S."/>
            <person name="Madan Babu M."/>
            <person name="Madera M."/>
            <person name="Marchionni L."/>
            <person name="Matsuda H."/>
            <person name="Matsuzawa S."/>
            <person name="Miki H."/>
            <person name="Mignone F."/>
            <person name="Miyake S."/>
            <person name="Morris K."/>
            <person name="Mottagui-Tabar S."/>
            <person name="Mulder N."/>
            <person name="Nakano N."/>
            <person name="Nakauchi H."/>
            <person name="Ng P."/>
            <person name="Nilsson R."/>
            <person name="Nishiguchi S."/>
            <person name="Nishikawa S."/>
            <person name="Nori F."/>
            <person name="Ohara O."/>
            <person name="Okazaki Y."/>
            <person name="Orlando V."/>
            <person name="Pang K.C."/>
            <person name="Pavan W.J."/>
            <person name="Pavesi G."/>
            <person name="Pesole G."/>
            <person name="Petrovsky N."/>
            <person name="Piazza S."/>
            <person name="Reed J."/>
            <person name="Reid J.F."/>
            <person name="Ring B.Z."/>
            <person name="Ringwald M."/>
            <person name="Rost B."/>
            <person name="Ruan Y."/>
            <person name="Salzberg S.L."/>
            <person name="Sandelin A."/>
            <person name="Schneider C."/>
            <person name="Schoenbach C."/>
            <person name="Sekiguchi K."/>
            <person name="Semple C.A."/>
            <person name="Seno S."/>
            <person name="Sessa L."/>
            <person name="Sheng Y."/>
            <person name="Shibata Y."/>
            <person name="Shimada H."/>
            <person name="Shimada K."/>
            <person name="Silva D."/>
            <person name="Sinclair B."/>
            <person name="Sperling S."/>
            <person name="Stupka E."/>
            <person name="Sugiura K."/>
            <person name="Sultana R."/>
            <person name="Takenaka Y."/>
            <person name="Taki K."/>
            <person name="Tammoja K."/>
            <person name="Tan S.L."/>
            <person name="Tang S."/>
            <person name="Taylor M.S."/>
            <person name="Tegner J."/>
            <person name="Teichmann S.A."/>
            <person name="Ueda H.R."/>
            <person name="van Nimwegen E."/>
            <person name="Verardo R."/>
            <person name="Wei C.L."/>
            <person name="Yagi K."/>
            <person name="Yamanishi H."/>
            <person name="Zabarovsky E."/>
            <person name="Zhu S."/>
            <person name="Zimmer A."/>
            <person name="Hide W."/>
            <person name="Bult C."/>
            <person name="Grimmond S.M."/>
            <person name="Teasdale R.D."/>
            <person name="Liu E.T."/>
            <person name="Brusic V."/>
            <person name="Quackenbush J."/>
            <person name="Wahlestedt C."/>
            <person name="Mattick J.S."/>
            <person name="Hume D.A."/>
            <person name="Kai C."/>
            <person name="Sasaki D."/>
            <person name="Tomaru Y."/>
            <person name="Fukuda S."/>
            <person name="Kanamori-Katayama M."/>
            <person name="Suzuki M."/>
            <person name="Aoki J."/>
            <person name="Arakawa T."/>
            <person name="Iida J."/>
            <person name="Imamura K."/>
            <person name="Itoh M."/>
            <person name="Kato T."/>
            <person name="Kawaji H."/>
            <person name="Kawagashira N."/>
            <person name="Kawashima T."/>
            <person name="Kojima M."/>
            <person name="Kondo S."/>
            <person name="Konno H."/>
            <person name="Nakano K."/>
            <person name="Ninomiya N."/>
            <person name="Nishio T."/>
            <person name="Okada M."/>
            <person name="Plessy C."/>
            <person name="Shibata K."/>
            <person name="Shiraki T."/>
            <person name="Suzuki S."/>
            <person name="Tagami M."/>
            <person name="Waki K."/>
            <person name="Watahiki A."/>
            <person name="Okamura-Oho Y."/>
            <person name="Suzuki H."/>
            <person name="Kawai J."/>
            <person name="Hayashizaki Y."/>
        </authorList>
    </citation>
    <scope>NUCLEOTIDE SEQUENCE [LARGE SCALE MRNA]</scope>
    <source>
        <strain>C57BL/6J</strain>
        <tissue>Corpora quadrigemina</tissue>
        <tissue>Diencephalon</tissue>
    </source>
</reference>
<reference key="3">
    <citation type="journal article" date="2004" name="Genome Res.">
        <title>The status, quality, and expansion of the NIH full-length cDNA project: the Mammalian Gene Collection (MGC).</title>
        <authorList>
            <consortium name="The MGC Project Team"/>
        </authorList>
    </citation>
    <scope>NUCLEOTIDE SEQUENCE [LARGE SCALE MRNA]</scope>
    <source>
        <strain>C57BL/6J</strain>
        <tissue>Eye</tissue>
    </source>
</reference>
<reference key="4">
    <citation type="journal article" date="2003" name="Nat. Biotechnol.">
        <title>Discovering potent and selective reversible inhibitors of enzymes in complex proteomes.</title>
        <authorList>
            <person name="Leung D."/>
            <person name="Hardouin C."/>
            <person name="Boger D.L."/>
            <person name="Cravatt B.F."/>
        </authorList>
    </citation>
    <scope>ACTIVITY REGULATION</scope>
    <scope>GLYCOSYLATION</scope>
</reference>
<reference key="5">
    <citation type="journal article" date="2005" name="Proc. Natl. Acad. Sci. U.S.A.">
        <title>A brain detoxifying enzyme for organophosphorus nerve poisons.</title>
        <authorList>
            <person name="Nomura D.K."/>
            <person name="Leung D."/>
            <person name="Chiang K.P."/>
            <person name="Quistad G.B."/>
            <person name="Cravatt B.F."/>
            <person name="Casida J.E."/>
        </authorList>
    </citation>
    <scope>FUNCTION</scope>
    <scope>DISRUPTION PHENOTYPE</scope>
</reference>
<reference key="6">
    <citation type="journal article" date="2006" name="Chem. Res. Toxicol.">
        <title>Serine hydrolase KIAA1363: toxicological and structural features with emphasis on organophosphate interactions.</title>
        <authorList>
            <person name="Nomura D.K."/>
            <person name="Durkin K.A."/>
            <person name="Chiang K.P."/>
            <person name="Quistad G.B."/>
            <person name="Cravatt B.F."/>
            <person name="Casida J.E."/>
        </authorList>
    </citation>
    <scope>FUNCTION</scope>
    <scope>ACTIVE SITE</scope>
    <scope>TISSUE SPECIFICITY</scope>
</reference>
<reference key="7">
    <citation type="journal article" date="2008" name="J. Biol. Chem.">
        <title>Identification of neutral cholesterol ester hydrolase, a key enzyme removing cholesterol from macrophages.</title>
        <authorList>
            <person name="Okazaki H."/>
            <person name="Igarashi M."/>
            <person name="Nishi M."/>
            <person name="Sekiya M."/>
            <person name="Tajima M."/>
            <person name="Takase S."/>
            <person name="Takanashi M."/>
            <person name="Ohta K."/>
            <person name="Tamura Y."/>
            <person name="Okazaki S."/>
            <person name="Yahagi N."/>
            <person name="Ohashi K."/>
            <person name="Amemiya-Kudo M."/>
            <person name="Nakagawa Y."/>
            <person name="Nagai R."/>
            <person name="Kadowaki T."/>
            <person name="Osuga J."/>
            <person name="Ishibashi S."/>
        </authorList>
    </citation>
    <scope>FUNCTION</scope>
    <scope>CATALYTIC ACTIVITY</scope>
    <scope>TISSUE SPECIFICITY</scope>
    <scope>SUBCELLULAR LOCATION</scope>
    <scope>BIOPHYSICOCHEMICAL PROPERTIES</scope>
</reference>
<reference key="8">
    <citation type="journal article" date="2008" name="Toxicol. Appl. Pharmacol.">
        <title>Dual roles of brain serine hydrolase KIAA1363 in ether lipid metabolism and organophosphate detoxification.</title>
        <authorList>
            <person name="Nomura D.K."/>
            <person name="Fujioka K."/>
            <person name="Issa R.S."/>
            <person name="Ward A.M."/>
            <person name="Cravatt B.F."/>
            <person name="Casida J.E."/>
        </authorList>
    </citation>
    <scope>FUNCTION</scope>
</reference>
<reference key="9">
    <citation type="journal article" date="2010" name="Cell">
        <title>A tissue-specific atlas of mouse protein phosphorylation and expression.</title>
        <authorList>
            <person name="Huttlin E.L."/>
            <person name="Jedrychowski M.P."/>
            <person name="Elias J.E."/>
            <person name="Goswami T."/>
            <person name="Rad R."/>
            <person name="Beausoleil S.A."/>
            <person name="Villen J."/>
            <person name="Haas W."/>
            <person name="Sowa M.E."/>
            <person name="Gygi S.P."/>
        </authorList>
    </citation>
    <scope>IDENTIFICATION BY MASS SPECTROMETRY [LARGE SCALE ANALYSIS]</scope>
    <source>
        <tissue>Brain</tissue>
        <tissue>Brown adipose tissue</tissue>
        <tissue>Heart</tissue>
        <tissue>Kidney</tissue>
        <tissue>Liver</tissue>
        <tissue>Lung</tissue>
        <tissue>Pancreas</tissue>
        <tissue>Spleen</tissue>
        <tissue>Testis</tissue>
    </source>
</reference>
<reference key="10">
    <citation type="journal article" date="2010" name="J. Lipid Res.">
        <title>Cholesteryl ester hydrolase activity is abolished in HSL-/- macrophages but unchanged in macrophages lacking KIAA1363.</title>
        <authorList>
            <person name="Buchebner M."/>
            <person name="Pfeifer T."/>
            <person name="Rathke N."/>
            <person name="Chandak P.G."/>
            <person name="Lass A."/>
            <person name="Schreiber R."/>
            <person name="Kratzer A."/>
            <person name="Zimmermann R."/>
            <person name="Sattler W."/>
            <person name="Koefeler H."/>
            <person name="Froehlich E."/>
            <person name="Kostner G.M."/>
            <person name="Birner-Gruenberger R."/>
            <person name="Chiang K.P."/>
            <person name="Haemmerle G."/>
            <person name="Zechner R."/>
            <person name="Levak-Frank S."/>
            <person name="Cravatt B."/>
            <person name="Kratky D."/>
        </authorList>
    </citation>
    <scope>FUNCTION</scope>
    <scope>CATALYTIC ACTIVITY</scope>
</reference>
<protein>
    <recommendedName>
        <fullName>Neutral cholesterol ester hydrolase 1</fullName>
        <shortName>NCEH</shortName>
        <ecNumber evidence="8 9">3.1.1.-</ecNumber>
    </recommendedName>
    <alternativeName>
        <fullName evidence="10">Acetylalkylglycerol acetylhydrolase</fullName>
        <shortName evidence="2">2-acetyl MAGE hydrolase</shortName>
        <ecNumber evidence="9">3.1.1.71</ecNumber>
    </alternativeName>
    <alternativeName>
        <fullName>Arylacetamide deacetylase-like 1</fullName>
    </alternativeName>
    <alternativeName>
        <fullName>Chlorpyrifos oxon-binding protein</fullName>
        <shortName>CPO-BP</shortName>
    </alternativeName>
</protein>
<name>NCEH1_MOUSE</name>
<sequence length="408" mass="45740">MRSSCVLLAALLALAAYYVYIPLPSAVSDPWKLMLLDATFRGAQQVSNLIHSLGLNHHLIALNFIITSFGKQSARSSPKVKVTDTDFDGVEVRVFEGSPKPEEPLRRSVIYIHGGGWALASAKISYYDQLCTTMAEELNAVIVSIEYRLVPQVYFPEQIHDVIRATKYFLQPEVLDKYKVDPGRVGISGDSAGGNLAAALGQQFTYVASLKNKLKLQALVYPVLQALDFNTPSYQQSMNTPILPRHVMVRYWLDYFKGNYDFVEAMIVNNHTSLDVERAAALRARLDWTSLLPSSIKKNYKPIMQTTGNARIVQEIPQLLDAAASPLIAEQEVLEALPKTYILTCEHDVLRDDGIMYAKRLESAGVNVTLDHFEDGFHGCMIFTSWPTNFSVGIRTRNSYIKWLDQNL</sequence>
<dbReference type="EC" id="3.1.1.-" evidence="8 9"/>
<dbReference type="EC" id="3.1.1.71" evidence="9"/>
<dbReference type="EMBL" id="AK173158">
    <property type="protein sequence ID" value="BAD32436.1"/>
    <property type="status" value="ALT_INIT"/>
    <property type="molecule type" value="mRNA"/>
</dbReference>
<dbReference type="EMBL" id="AK034339">
    <property type="protein sequence ID" value="BAC28680.1"/>
    <property type="molecule type" value="mRNA"/>
</dbReference>
<dbReference type="EMBL" id="AK045363">
    <property type="protein sequence ID" value="BAC32327.1"/>
    <property type="molecule type" value="mRNA"/>
</dbReference>
<dbReference type="EMBL" id="AK135837">
    <property type="protein sequence ID" value="BAE22685.1"/>
    <property type="molecule type" value="mRNA"/>
</dbReference>
<dbReference type="EMBL" id="BC082569">
    <property type="protein sequence ID" value="AAH82569.1"/>
    <property type="molecule type" value="mRNA"/>
</dbReference>
<dbReference type="CCDS" id="CCDS17271.1"/>
<dbReference type="RefSeq" id="NP_848887.1">
    <property type="nucleotide sequence ID" value="NM_178772.4"/>
</dbReference>
<dbReference type="SMR" id="Q8BLF1"/>
<dbReference type="BioGRID" id="235704">
    <property type="interactions" value="18"/>
</dbReference>
<dbReference type="FunCoup" id="Q8BLF1">
    <property type="interactions" value="145"/>
</dbReference>
<dbReference type="IntAct" id="Q8BLF1">
    <property type="interactions" value="1"/>
</dbReference>
<dbReference type="MINT" id="Q8BLF1"/>
<dbReference type="STRING" id="10090.ENSMUSP00000045864"/>
<dbReference type="BindingDB" id="Q8BLF1"/>
<dbReference type="ChEMBL" id="CHEMBL5428"/>
<dbReference type="SwissLipids" id="SLP:000000319"/>
<dbReference type="ESTHER" id="mouse-Q8BLF1">
    <property type="family name" value="Arylacetamide_deacetylase"/>
</dbReference>
<dbReference type="MEROPS" id="S09.992"/>
<dbReference type="GlyConnect" id="2560">
    <property type="glycosylation" value="5 N-Linked glycans (1 site)"/>
</dbReference>
<dbReference type="GlyCosmos" id="Q8BLF1">
    <property type="glycosylation" value="3 sites, 5 glycans"/>
</dbReference>
<dbReference type="GlyGen" id="Q8BLF1">
    <property type="glycosylation" value="4 sites, 8 N-linked glycans (3 sites), 1 O-linked glycan (1 site)"/>
</dbReference>
<dbReference type="iPTMnet" id="Q8BLF1"/>
<dbReference type="PhosphoSitePlus" id="Q8BLF1"/>
<dbReference type="SwissPalm" id="Q8BLF1"/>
<dbReference type="jPOST" id="Q8BLF1"/>
<dbReference type="PaxDb" id="10090-ENSMUSP00000045864"/>
<dbReference type="PeptideAtlas" id="Q8BLF1"/>
<dbReference type="ProteomicsDB" id="252648"/>
<dbReference type="Pumba" id="Q8BLF1"/>
<dbReference type="Antibodypedia" id="33731">
    <property type="antibodies" value="109 antibodies from 24 providers"/>
</dbReference>
<dbReference type="DNASU" id="320024"/>
<dbReference type="Ensembl" id="ENSMUST00000046515.15">
    <property type="protein sequence ID" value="ENSMUSP00000045864.9"/>
    <property type="gene ID" value="ENSMUSG00000027698.15"/>
</dbReference>
<dbReference type="GeneID" id="320024"/>
<dbReference type="KEGG" id="mmu:320024"/>
<dbReference type="UCSC" id="uc008otl.1">
    <property type="organism name" value="mouse"/>
</dbReference>
<dbReference type="AGR" id="MGI:2443191"/>
<dbReference type="CTD" id="57552"/>
<dbReference type="MGI" id="MGI:2443191">
    <property type="gene designation" value="Nceh1"/>
</dbReference>
<dbReference type="VEuPathDB" id="HostDB:ENSMUSG00000027698"/>
<dbReference type="eggNOG" id="KOG1515">
    <property type="taxonomic scope" value="Eukaryota"/>
</dbReference>
<dbReference type="GeneTree" id="ENSGT00940000156699"/>
<dbReference type="HOGENOM" id="CLU_012494_12_0_1"/>
<dbReference type="InParanoid" id="Q8BLF1"/>
<dbReference type="OMA" id="FHGCMAF"/>
<dbReference type="OrthoDB" id="408631at2759"/>
<dbReference type="PhylomeDB" id="Q8BLF1"/>
<dbReference type="TreeFam" id="TF314978"/>
<dbReference type="BRENDA" id="3.1.1.13">
    <property type="organism ID" value="3474"/>
</dbReference>
<dbReference type="Reactome" id="R-MMU-8964038">
    <property type="pathway name" value="LDL clearance"/>
</dbReference>
<dbReference type="BioGRID-ORCS" id="320024">
    <property type="hits" value="4 hits in 80 CRISPR screens"/>
</dbReference>
<dbReference type="ChiTaRS" id="Nceh1">
    <property type="organism name" value="mouse"/>
</dbReference>
<dbReference type="PRO" id="PR:Q8BLF1"/>
<dbReference type="Proteomes" id="UP000000589">
    <property type="component" value="Chromosome 3"/>
</dbReference>
<dbReference type="RNAct" id="Q8BLF1">
    <property type="molecule type" value="protein"/>
</dbReference>
<dbReference type="Bgee" id="ENSMUSG00000027698">
    <property type="expression patterns" value="Expressed in interventricular septum and 229 other cell types or tissues"/>
</dbReference>
<dbReference type="ExpressionAtlas" id="Q8BLF1">
    <property type="expression patterns" value="baseline and differential"/>
</dbReference>
<dbReference type="GO" id="GO:0005783">
    <property type="term" value="C:endoplasmic reticulum"/>
    <property type="evidence" value="ECO:0007669"/>
    <property type="project" value="UniProtKB-KW"/>
</dbReference>
<dbReference type="GO" id="GO:0016020">
    <property type="term" value="C:membrane"/>
    <property type="evidence" value="ECO:0000314"/>
    <property type="project" value="MGI"/>
</dbReference>
<dbReference type="GO" id="GO:0005886">
    <property type="term" value="C:plasma membrane"/>
    <property type="evidence" value="ECO:0007669"/>
    <property type="project" value="UniProtKB-SubCell"/>
</dbReference>
<dbReference type="GO" id="GO:0047378">
    <property type="term" value="F:acetylalkylglycerol acetylhydrolase activity"/>
    <property type="evidence" value="ECO:0007669"/>
    <property type="project" value="RHEA"/>
</dbReference>
<dbReference type="GO" id="GO:0042301">
    <property type="term" value="F:phosphate ion binding"/>
    <property type="evidence" value="ECO:0000314"/>
    <property type="project" value="MGI"/>
</dbReference>
<dbReference type="GO" id="GO:0017171">
    <property type="term" value="F:serine hydrolase activity"/>
    <property type="evidence" value="ECO:0000314"/>
    <property type="project" value="MGI"/>
</dbReference>
<dbReference type="GO" id="GO:0046485">
    <property type="term" value="P:ether lipid metabolic process"/>
    <property type="evidence" value="ECO:0000314"/>
    <property type="project" value="UniProtKB"/>
</dbReference>
<dbReference type="GO" id="GO:0016042">
    <property type="term" value="P:lipid catabolic process"/>
    <property type="evidence" value="ECO:0007669"/>
    <property type="project" value="UniProtKB-KW"/>
</dbReference>
<dbReference type="GO" id="GO:0006805">
    <property type="term" value="P:xenobiotic metabolic process"/>
    <property type="evidence" value="ECO:0000315"/>
    <property type="project" value="MGI"/>
</dbReference>
<dbReference type="Gene3D" id="3.40.50.1820">
    <property type="entry name" value="alpha/beta hydrolase"/>
    <property type="match status" value="1"/>
</dbReference>
<dbReference type="InterPro" id="IPR013094">
    <property type="entry name" value="AB_hydrolase_3"/>
</dbReference>
<dbReference type="InterPro" id="IPR029058">
    <property type="entry name" value="AB_hydrolase_fold"/>
</dbReference>
<dbReference type="InterPro" id="IPR017157">
    <property type="entry name" value="Arylacetamide_deacetylase"/>
</dbReference>
<dbReference type="InterPro" id="IPR050300">
    <property type="entry name" value="GDXG_lipolytic_enzyme"/>
</dbReference>
<dbReference type="InterPro" id="IPR033140">
    <property type="entry name" value="Lipase_GDXG_put_SER_AS"/>
</dbReference>
<dbReference type="PANTHER" id="PTHR48081">
    <property type="entry name" value="AB HYDROLASE SUPERFAMILY PROTEIN C4A8.06C"/>
    <property type="match status" value="1"/>
</dbReference>
<dbReference type="PANTHER" id="PTHR48081:SF29">
    <property type="entry name" value="NEUTRAL CHOLESTEROL ESTER HYDROLASE 1"/>
    <property type="match status" value="1"/>
</dbReference>
<dbReference type="Pfam" id="PF07859">
    <property type="entry name" value="Abhydrolase_3"/>
    <property type="match status" value="2"/>
</dbReference>
<dbReference type="PIRSF" id="PIRSF037251">
    <property type="entry name" value="Arylacetamide_deacetylase"/>
    <property type="match status" value="1"/>
</dbReference>
<dbReference type="SUPFAM" id="SSF53474">
    <property type="entry name" value="alpha/beta-Hydrolases"/>
    <property type="match status" value="1"/>
</dbReference>
<dbReference type="PROSITE" id="PS01174">
    <property type="entry name" value="LIPASE_GDXG_SER"/>
    <property type="match status" value="1"/>
</dbReference>
<comment type="function">
    <text evidence="5 6 7 8 9">Hydrolyzes 2-acetyl monoalkylglycerol ether (1-O-alkyl-2-acetyl-sn-glycerol), the penultimate precursor of the pathway for de novo synthesis of platelet-activating factor (PubMed:18164358, PubMed:20625037). May be responsible for the hydrolysis of cholesterol esters (such as cholesteryl (9Z-octadecenoate)) in macrophages (PubMed:18782767). Also involved in organ detoxification by hydrolyzing exogenous organophosphorus compounds (PubMed:15840715, PubMed:16978018, PubMed:18164358).</text>
</comment>
<comment type="catalytic activity">
    <reaction evidence="9">
        <text>a 1-O-alkyl-2-acetyl-sn-glycerol + H2O = a 1-O-alkyl-sn-glycerol + acetate + H(+)</text>
        <dbReference type="Rhea" id="RHEA:11552"/>
        <dbReference type="ChEBI" id="CHEBI:15377"/>
        <dbReference type="ChEBI" id="CHEBI:15378"/>
        <dbReference type="ChEBI" id="CHEBI:15850"/>
        <dbReference type="ChEBI" id="CHEBI:16291"/>
        <dbReference type="ChEBI" id="CHEBI:30089"/>
        <dbReference type="EC" id="3.1.1.71"/>
    </reaction>
    <physiologicalReaction direction="left-to-right" evidence="9">
        <dbReference type="Rhea" id="RHEA:11553"/>
    </physiologicalReaction>
</comment>
<comment type="catalytic activity">
    <reaction evidence="9">
        <text>1-O-hexadecyl-2-acetyl-sn-glycerol + H2O = 1-O-hexadecyl-sn-glycerol + acetate + H(+)</text>
        <dbReference type="Rhea" id="RHEA:38563"/>
        <dbReference type="ChEBI" id="CHEBI:15377"/>
        <dbReference type="ChEBI" id="CHEBI:15378"/>
        <dbReference type="ChEBI" id="CHEBI:30089"/>
        <dbReference type="ChEBI" id="CHEBI:34115"/>
        <dbReference type="ChEBI" id="CHEBI:75936"/>
    </reaction>
    <physiologicalReaction direction="left-to-right" evidence="9">
        <dbReference type="Rhea" id="RHEA:38564"/>
    </physiologicalReaction>
</comment>
<comment type="catalytic activity">
    <reaction evidence="8 9">
        <text>a cholesterol ester + H2O = cholesterol + a fatty acid + H(+)</text>
        <dbReference type="Rhea" id="RHEA:36403"/>
        <dbReference type="ChEBI" id="CHEBI:15377"/>
        <dbReference type="ChEBI" id="CHEBI:15378"/>
        <dbReference type="ChEBI" id="CHEBI:16113"/>
        <dbReference type="ChEBI" id="CHEBI:17002"/>
        <dbReference type="ChEBI" id="CHEBI:28868"/>
    </reaction>
    <physiologicalReaction direction="left-to-right" evidence="12">
        <dbReference type="Rhea" id="RHEA:36404"/>
    </physiologicalReaction>
</comment>
<comment type="catalytic activity">
    <reaction evidence="8 9">
        <text>cholesteryl (9Z-octadecenoate) + H2O = cholesterol + (9Z)-octadecenoate + H(+)</text>
        <dbReference type="Rhea" id="RHEA:33875"/>
        <dbReference type="ChEBI" id="CHEBI:15377"/>
        <dbReference type="ChEBI" id="CHEBI:15378"/>
        <dbReference type="ChEBI" id="CHEBI:16113"/>
        <dbReference type="ChEBI" id="CHEBI:30823"/>
        <dbReference type="ChEBI" id="CHEBI:46898"/>
    </reaction>
    <physiologicalReaction direction="left-to-right" evidence="12">
        <dbReference type="Rhea" id="RHEA:33876"/>
    </physiologicalReaction>
</comment>
<comment type="activity regulation">
    <text evidence="4">Inhibited by bulky trifluoromethyl ketones.</text>
</comment>
<comment type="biophysicochemical properties">
    <phDependence>
        <text evidence="8">Optimum pH is 7.2 for cholesterol ester hydrolysis.</text>
    </phDependence>
</comment>
<comment type="subcellular location">
    <subcellularLocation>
        <location evidence="2">Cell membrane</location>
        <topology evidence="2">Single-pass type II membrane protein</topology>
    </subcellularLocation>
    <subcellularLocation>
        <location evidence="8">Microsome</location>
    </subcellularLocation>
</comment>
<comment type="tissue specificity">
    <text evidence="6 8">Present in brain, heart, kidney, lung, spinal cord and testis but not liver (at protein level). Expressed in peritoneal macrophages and kidney.</text>
</comment>
<comment type="PTM">
    <text evidence="4">N-glycosylated.</text>
</comment>
<comment type="disruption phenotype">
    <text evidence="5">Mice are phenotypically normal but more sensitive to organophosphorus insecticide toxicity.</text>
</comment>
<comment type="similarity">
    <text evidence="10">Belongs to the 'GDXG' lipolytic enzyme family.</text>
</comment>
<comment type="sequence caution" evidence="10">
    <conflict type="erroneous initiation">
        <sequence resource="EMBL-CDS" id="BAD32436"/>
    </conflict>
    <text>Extended N-terminus.</text>
</comment>
<evidence type="ECO:0000250" key="1">
    <source>
        <dbReference type="UniProtKB" id="Q5NUF3"/>
    </source>
</evidence>
<evidence type="ECO:0000250" key="2">
    <source>
        <dbReference type="UniProtKB" id="Q6PIU2"/>
    </source>
</evidence>
<evidence type="ECO:0000255" key="3"/>
<evidence type="ECO:0000269" key="4">
    <source>
    </source>
</evidence>
<evidence type="ECO:0000269" key="5">
    <source>
    </source>
</evidence>
<evidence type="ECO:0000269" key="6">
    <source>
    </source>
</evidence>
<evidence type="ECO:0000269" key="7">
    <source>
    </source>
</evidence>
<evidence type="ECO:0000269" key="8">
    <source>
    </source>
</evidence>
<evidence type="ECO:0000269" key="9">
    <source>
    </source>
</evidence>
<evidence type="ECO:0000305" key="10"/>
<evidence type="ECO:0000305" key="11">
    <source>
    </source>
</evidence>
<evidence type="ECO:0000305" key="12">
    <source>
    </source>
</evidence>
<proteinExistence type="evidence at protein level"/>
<organism>
    <name type="scientific">Mus musculus</name>
    <name type="common">Mouse</name>
    <dbReference type="NCBI Taxonomy" id="10090"/>
    <lineage>
        <taxon>Eukaryota</taxon>
        <taxon>Metazoa</taxon>
        <taxon>Chordata</taxon>
        <taxon>Craniata</taxon>
        <taxon>Vertebrata</taxon>
        <taxon>Euteleostomi</taxon>
        <taxon>Mammalia</taxon>
        <taxon>Eutheria</taxon>
        <taxon>Euarchontoglires</taxon>
        <taxon>Glires</taxon>
        <taxon>Rodentia</taxon>
        <taxon>Myomorpha</taxon>
        <taxon>Muroidea</taxon>
        <taxon>Muridae</taxon>
        <taxon>Murinae</taxon>
        <taxon>Mus</taxon>
        <taxon>Mus</taxon>
    </lineage>
</organism>
<feature type="chain" id="PRO_0000265940" description="Neutral cholesterol ester hydrolase 1">
    <location>
        <begin position="1"/>
        <end position="408"/>
    </location>
</feature>
<feature type="topological domain" description="Cytoplasmic" evidence="3">
    <location>
        <begin position="1"/>
        <end position="4"/>
    </location>
</feature>
<feature type="transmembrane region" description="Helical; Signal-anchor for type II membrane protein" evidence="3">
    <location>
        <begin position="5"/>
        <end position="25"/>
    </location>
</feature>
<feature type="topological domain" description="Lumenal" evidence="3">
    <location>
        <begin position="26"/>
        <end position="408"/>
    </location>
</feature>
<feature type="short sequence motif" description="Involved in the stabilization of the negatively charged intermediate by the formation of the oxyanion hole" evidence="1">
    <location>
        <begin position="113"/>
        <end position="115"/>
    </location>
</feature>
<feature type="active site" evidence="11">
    <location>
        <position position="191"/>
    </location>
</feature>
<feature type="active site" evidence="11">
    <location>
        <position position="348"/>
    </location>
</feature>
<feature type="active site" evidence="11">
    <location>
        <position position="378"/>
    </location>
</feature>
<feature type="glycosylation site" description="N-linked (GlcNAc...) asparagine" evidence="3">
    <location>
        <position position="270"/>
    </location>
</feature>
<feature type="glycosylation site" description="N-linked (GlcNAc...) asparagine" evidence="3">
    <location>
        <position position="367"/>
    </location>
</feature>
<feature type="glycosylation site" description="N-linked (GlcNAc...) asparagine" evidence="3">
    <location>
        <position position="389"/>
    </location>
</feature>
<feature type="sequence conflict" description="In Ref. 2; BAC28680." evidence="10" ref="2">
    <original>R</original>
    <variation>Q</variation>
    <location>
        <position position="93"/>
    </location>
</feature>
<accession>Q8BLF1</accession>
<accession>Q69ZL0</accession>
<accession>Q8BZK3</accession>
<keyword id="KW-1003">Cell membrane</keyword>
<keyword id="KW-0256">Endoplasmic reticulum</keyword>
<keyword id="KW-0325">Glycoprotein</keyword>
<keyword id="KW-0378">Hydrolase</keyword>
<keyword id="KW-0442">Lipid degradation</keyword>
<keyword id="KW-0443">Lipid metabolism</keyword>
<keyword id="KW-0472">Membrane</keyword>
<keyword id="KW-0492">Microsome</keyword>
<keyword id="KW-1185">Reference proteome</keyword>
<keyword id="KW-0735">Signal-anchor</keyword>
<keyword id="KW-0812">Transmembrane</keyword>
<keyword id="KW-1133">Transmembrane helix</keyword>